<proteinExistence type="inferred from homology"/>
<sequence length="725" mass="77156">MTLAMAEQIATADNPAFVVVSDAAGRMRIQIEWVRSNPRRAVTVEEAIAKCNGVRVVHAYPRTGSVVVWYSPRCCDRQSILAAISGAAHVAAELIPTRAPHSSDIRNIEVLRMAIGAAALTLLGVRRYVFARPLLLPTTSRLVASGVTIFTGYPFLRGALRFGKTGTDALVSVATIASLILRENVVALAVLWLLNIGEYLQDLTLRRTRRAISALLSGTQDTAWIRLTDGPQAGTEIQVPIGTVQIGDEVVVHEHVAIPVDGEVIDGEAVVNQSAITGENLPVSVMAGSHVHAGSVVVRGRLMVRASAVGKHTTIGRIVTRVEEAQHDRAPIQTVGENFSRCFVPTSFVVSAITLAITKDVRRTMTVLLIACPCAVGLATPTAISAAIGNGARRGILIKGGSHLEQAGRVDAILFDKTGTLTVGRPVVTNIVAMHKDWSPEQVLAYAASSEIHSRHPLAEAVIRSTEERHISIPPHEECEVLVGLGMRTWADGRTLLLGSPSLLCAEKVKVSKTASEWVDKLRHQTETPLLFAVDGTLVGLISLRDEVRPEAAEVLTKLRASGVRRIVMLTGDHPDIAKAVATELGIDEWRAEVMPEDKLKVVRDLQNEGYVVGMVGDGVNDAPALAAADIGIAMGLAGTDVAVETADVALANDDLNRLLDVRDLGGRAVEVIRENYGMSIAVNAAGLFIGAGGALSPVLAAVLHNASSVAVVANSSRLIRYRLD</sequence>
<organism>
    <name type="scientific">Mycobacterium leprae (strain TN)</name>
    <dbReference type="NCBI Taxonomy" id="272631"/>
    <lineage>
        <taxon>Bacteria</taxon>
        <taxon>Bacillati</taxon>
        <taxon>Actinomycetota</taxon>
        <taxon>Actinomycetes</taxon>
        <taxon>Mycobacteriales</taxon>
        <taxon>Mycobacteriaceae</taxon>
        <taxon>Mycobacterium</taxon>
    </lineage>
</organism>
<dbReference type="EC" id="7.2.2.22" evidence="1"/>
<dbReference type="EMBL" id="AL583919">
    <property type="protein sequence ID" value="CAC30256.1"/>
    <property type="molecule type" value="Genomic_DNA"/>
</dbReference>
<dbReference type="PIR" id="D87002">
    <property type="entry name" value="D87002"/>
</dbReference>
<dbReference type="RefSeq" id="NP_301578.1">
    <property type="nucleotide sequence ID" value="NC_002677.1"/>
</dbReference>
<dbReference type="RefSeq" id="WP_010907902.1">
    <property type="nucleotide sequence ID" value="NC_002677.1"/>
</dbReference>
<dbReference type="SMR" id="Q9CCL1"/>
<dbReference type="STRING" id="272631.gene:17574571"/>
<dbReference type="KEGG" id="mle:ML0747"/>
<dbReference type="PATRIC" id="fig|272631.5.peg.1356"/>
<dbReference type="Leproma" id="ML0747"/>
<dbReference type="eggNOG" id="COG2217">
    <property type="taxonomic scope" value="Bacteria"/>
</dbReference>
<dbReference type="HOGENOM" id="CLU_001771_6_4_11"/>
<dbReference type="OrthoDB" id="7059309at2"/>
<dbReference type="Proteomes" id="UP000000806">
    <property type="component" value="Chromosome"/>
</dbReference>
<dbReference type="GO" id="GO:0005886">
    <property type="term" value="C:plasma membrane"/>
    <property type="evidence" value="ECO:0007669"/>
    <property type="project" value="UniProtKB-SubCell"/>
</dbReference>
<dbReference type="GO" id="GO:0005524">
    <property type="term" value="F:ATP binding"/>
    <property type="evidence" value="ECO:0007669"/>
    <property type="project" value="UniProtKB-KW"/>
</dbReference>
<dbReference type="GO" id="GO:0016887">
    <property type="term" value="F:ATP hydrolysis activity"/>
    <property type="evidence" value="ECO:0007669"/>
    <property type="project" value="InterPro"/>
</dbReference>
<dbReference type="GO" id="GO:0005507">
    <property type="term" value="F:copper ion binding"/>
    <property type="evidence" value="ECO:0007669"/>
    <property type="project" value="TreeGrafter"/>
</dbReference>
<dbReference type="GO" id="GO:0043682">
    <property type="term" value="F:P-type divalent copper transporter activity"/>
    <property type="evidence" value="ECO:0007669"/>
    <property type="project" value="TreeGrafter"/>
</dbReference>
<dbReference type="GO" id="GO:0140613">
    <property type="term" value="F:P-type manganese transporter activity"/>
    <property type="evidence" value="ECO:0007669"/>
    <property type="project" value="RHEA"/>
</dbReference>
<dbReference type="GO" id="GO:0055070">
    <property type="term" value="P:copper ion homeostasis"/>
    <property type="evidence" value="ECO:0007669"/>
    <property type="project" value="TreeGrafter"/>
</dbReference>
<dbReference type="CDD" id="cd02079">
    <property type="entry name" value="P-type_ATPase_HM"/>
    <property type="match status" value="1"/>
</dbReference>
<dbReference type="Gene3D" id="3.40.1110.10">
    <property type="entry name" value="Calcium-transporting ATPase, cytoplasmic domain N"/>
    <property type="match status" value="1"/>
</dbReference>
<dbReference type="Gene3D" id="2.70.150.10">
    <property type="entry name" value="Calcium-transporting ATPase, cytoplasmic transduction domain A"/>
    <property type="match status" value="1"/>
</dbReference>
<dbReference type="Gene3D" id="3.40.50.1000">
    <property type="entry name" value="HAD superfamily/HAD-like"/>
    <property type="match status" value="1"/>
</dbReference>
<dbReference type="InterPro" id="IPR023299">
    <property type="entry name" value="ATPase_P-typ_cyto_dom_N"/>
</dbReference>
<dbReference type="InterPro" id="IPR018303">
    <property type="entry name" value="ATPase_P-typ_P_site"/>
</dbReference>
<dbReference type="InterPro" id="IPR023298">
    <property type="entry name" value="ATPase_P-typ_TM_dom_sf"/>
</dbReference>
<dbReference type="InterPro" id="IPR008250">
    <property type="entry name" value="ATPase_P-typ_transduc_dom_A_sf"/>
</dbReference>
<dbReference type="InterPro" id="IPR036412">
    <property type="entry name" value="HAD-like_sf"/>
</dbReference>
<dbReference type="InterPro" id="IPR023214">
    <property type="entry name" value="HAD_sf"/>
</dbReference>
<dbReference type="InterPro" id="IPR006121">
    <property type="entry name" value="HMA_dom"/>
</dbReference>
<dbReference type="InterPro" id="IPR027256">
    <property type="entry name" value="P-typ_ATPase_IB"/>
</dbReference>
<dbReference type="InterPro" id="IPR001757">
    <property type="entry name" value="P_typ_ATPase"/>
</dbReference>
<dbReference type="InterPro" id="IPR044492">
    <property type="entry name" value="P_typ_ATPase_HD_dom"/>
</dbReference>
<dbReference type="NCBIfam" id="TIGR01511">
    <property type="entry name" value="ATPase-IB1_Cu"/>
    <property type="match status" value="1"/>
</dbReference>
<dbReference type="NCBIfam" id="TIGR01525">
    <property type="entry name" value="ATPase-IB_hvy"/>
    <property type="match status" value="1"/>
</dbReference>
<dbReference type="NCBIfam" id="TIGR01494">
    <property type="entry name" value="ATPase_P-type"/>
    <property type="match status" value="1"/>
</dbReference>
<dbReference type="PANTHER" id="PTHR43520">
    <property type="entry name" value="ATP7, ISOFORM B"/>
    <property type="match status" value="1"/>
</dbReference>
<dbReference type="PANTHER" id="PTHR43520:SF8">
    <property type="entry name" value="P-TYPE CU(+) TRANSPORTER"/>
    <property type="match status" value="1"/>
</dbReference>
<dbReference type="Pfam" id="PF00122">
    <property type="entry name" value="E1-E2_ATPase"/>
    <property type="match status" value="1"/>
</dbReference>
<dbReference type="Pfam" id="PF00702">
    <property type="entry name" value="Hydrolase"/>
    <property type="match status" value="1"/>
</dbReference>
<dbReference type="PRINTS" id="PR00119">
    <property type="entry name" value="CATATPASE"/>
</dbReference>
<dbReference type="SFLD" id="SFLDS00003">
    <property type="entry name" value="Haloacid_Dehalogenase"/>
    <property type="match status" value="1"/>
</dbReference>
<dbReference type="SFLD" id="SFLDF00027">
    <property type="entry name" value="p-type_atpase"/>
    <property type="match status" value="1"/>
</dbReference>
<dbReference type="SUPFAM" id="SSF81653">
    <property type="entry name" value="Calcium ATPase, transduction domain A"/>
    <property type="match status" value="1"/>
</dbReference>
<dbReference type="SUPFAM" id="SSF81665">
    <property type="entry name" value="Calcium ATPase, transmembrane domain M"/>
    <property type="match status" value="1"/>
</dbReference>
<dbReference type="SUPFAM" id="SSF56784">
    <property type="entry name" value="HAD-like"/>
    <property type="match status" value="1"/>
</dbReference>
<dbReference type="PROSITE" id="PS00154">
    <property type="entry name" value="ATPASE_E1_E2"/>
    <property type="match status" value="1"/>
</dbReference>
<dbReference type="PROSITE" id="PS50846">
    <property type="entry name" value="HMA_2"/>
    <property type="match status" value="1"/>
</dbReference>
<protein>
    <recommendedName>
        <fullName evidence="1">Manganese-exporting P-type ATPase</fullName>
        <ecNumber evidence="1">7.2.2.22</ecNumber>
    </recommendedName>
</protein>
<gene>
    <name type="primary">ctpC</name>
    <name type="ordered locus">ML0747</name>
</gene>
<reference key="1">
    <citation type="journal article" date="2001" name="Nature">
        <title>Massive gene decay in the leprosy bacillus.</title>
        <authorList>
            <person name="Cole S.T."/>
            <person name="Eiglmeier K."/>
            <person name="Parkhill J."/>
            <person name="James K.D."/>
            <person name="Thomson N.R."/>
            <person name="Wheeler P.R."/>
            <person name="Honore N."/>
            <person name="Garnier T."/>
            <person name="Churcher C.M."/>
            <person name="Harris D.E."/>
            <person name="Mungall K.L."/>
            <person name="Basham D."/>
            <person name="Brown D."/>
            <person name="Chillingworth T."/>
            <person name="Connor R."/>
            <person name="Davies R.M."/>
            <person name="Devlin K."/>
            <person name="Duthoy S."/>
            <person name="Feltwell T."/>
            <person name="Fraser A."/>
            <person name="Hamlin N."/>
            <person name="Holroyd S."/>
            <person name="Hornsby T."/>
            <person name="Jagels K."/>
            <person name="Lacroix C."/>
            <person name="Maclean J."/>
            <person name="Moule S."/>
            <person name="Murphy L.D."/>
            <person name="Oliver K."/>
            <person name="Quail M.A."/>
            <person name="Rajandream M.A."/>
            <person name="Rutherford K.M."/>
            <person name="Rutter S."/>
            <person name="Seeger K."/>
            <person name="Simon S."/>
            <person name="Simmonds M."/>
            <person name="Skelton J."/>
            <person name="Squares R."/>
            <person name="Squares S."/>
            <person name="Stevens K."/>
            <person name="Taylor K."/>
            <person name="Whitehead S."/>
            <person name="Woodward J.R."/>
            <person name="Barrell B.G."/>
        </authorList>
    </citation>
    <scope>NUCLEOTIDE SEQUENCE [LARGE SCALE GENOMIC DNA]</scope>
    <source>
        <strain>TN</strain>
    </source>
</reference>
<keyword id="KW-0067">ATP-binding</keyword>
<keyword id="KW-1003">Cell membrane</keyword>
<keyword id="KW-0460">Magnesium</keyword>
<keyword id="KW-0464">Manganese</keyword>
<keyword id="KW-0472">Membrane</keyword>
<keyword id="KW-0479">Metal-binding</keyword>
<keyword id="KW-0547">Nucleotide-binding</keyword>
<keyword id="KW-0597">Phosphoprotein</keyword>
<keyword id="KW-1185">Reference proteome</keyword>
<keyword id="KW-1278">Translocase</keyword>
<keyword id="KW-0812">Transmembrane</keyword>
<keyword id="KW-1133">Transmembrane helix</keyword>
<evidence type="ECO:0000250" key="1">
    <source>
        <dbReference type="UniProtKB" id="P9WPT5"/>
    </source>
</evidence>
<evidence type="ECO:0000250" key="2">
    <source>
        <dbReference type="UniProtKB" id="Q5ZWR1"/>
    </source>
</evidence>
<evidence type="ECO:0000255" key="3">
    <source>
        <dbReference type="PROSITE-ProRule" id="PRU00280"/>
    </source>
</evidence>
<evidence type="ECO:0000305" key="4"/>
<feature type="chain" id="PRO_0000046336" description="Manganese-exporting P-type ATPase">
    <location>
        <begin position="1"/>
        <end position="725"/>
    </location>
</feature>
<feature type="transmembrane region" description="Helical" evidence="1">
    <location>
        <begin position="101"/>
        <end position="119"/>
    </location>
</feature>
<feature type="transmembrane region" description="Helical" evidence="1">
    <location>
        <begin position="142"/>
        <end position="160"/>
    </location>
</feature>
<feature type="transmembrane region" description="Helical" evidence="1">
    <location>
        <begin position="165"/>
        <end position="179"/>
    </location>
</feature>
<feature type="transmembrane region" description="Helical" evidence="1">
    <location>
        <begin position="188"/>
        <end position="202"/>
    </location>
</feature>
<feature type="transmembrane region" description="Helical" evidence="1">
    <location>
        <begin position="335"/>
        <end position="359"/>
    </location>
</feature>
<feature type="transmembrane region" description="Helical" evidence="1">
    <location>
        <begin position="365"/>
        <end position="383"/>
    </location>
</feature>
<feature type="transmembrane region" description="Helical" evidence="1">
    <location>
        <begin position="669"/>
        <end position="688"/>
    </location>
</feature>
<feature type="transmembrane region" description="Helical" evidence="1">
    <location>
        <begin position="698"/>
        <end position="717"/>
    </location>
</feature>
<feature type="domain" description="HMA" evidence="3">
    <location>
        <begin position="25"/>
        <end position="92"/>
    </location>
</feature>
<feature type="active site" description="4-aspartylphosphate intermediate" evidence="2">
    <location>
        <position position="416"/>
    </location>
</feature>
<feature type="binding site" evidence="2">
    <location>
        <position position="416"/>
    </location>
    <ligand>
        <name>Mg(2+)</name>
        <dbReference type="ChEBI" id="CHEBI:18420"/>
    </ligand>
</feature>
<feature type="binding site" evidence="2">
    <location>
        <position position="418"/>
    </location>
    <ligand>
        <name>Mg(2+)</name>
        <dbReference type="ChEBI" id="CHEBI:18420"/>
    </ligand>
</feature>
<feature type="binding site" evidence="2">
    <location>
        <position position="618"/>
    </location>
    <ligand>
        <name>Mg(2+)</name>
        <dbReference type="ChEBI" id="CHEBI:18420"/>
    </ligand>
</feature>
<accession>Q9CCL1</accession>
<comment type="function">
    <text evidence="1">High affinity, slow turnover Mn(2+) transporting ATPase.</text>
</comment>
<comment type="catalytic activity">
    <reaction evidence="1">
        <text>Mn(2+)(in) + ATP + H2O = Mn(2+)(out) + ADP + phosphate + H(+)</text>
        <dbReference type="Rhea" id="RHEA:66820"/>
        <dbReference type="ChEBI" id="CHEBI:15377"/>
        <dbReference type="ChEBI" id="CHEBI:15378"/>
        <dbReference type="ChEBI" id="CHEBI:29035"/>
        <dbReference type="ChEBI" id="CHEBI:30616"/>
        <dbReference type="ChEBI" id="CHEBI:43474"/>
        <dbReference type="ChEBI" id="CHEBI:456216"/>
        <dbReference type="EC" id="7.2.2.22"/>
    </reaction>
</comment>
<comment type="subcellular location">
    <subcellularLocation>
        <location evidence="1">Cell membrane</location>
        <topology evidence="1">Multi-pass membrane protein</topology>
    </subcellularLocation>
</comment>
<comment type="similarity">
    <text evidence="4">Belongs to the cation transport ATPase (P-type) (TC 3.A.3) family. Type IB subfamily.</text>
</comment>
<name>CTPC_MYCLE</name>